<gene>
    <name evidence="1" type="primary">rplK</name>
    <name type="ordered locus">Acry_1956</name>
</gene>
<evidence type="ECO:0000255" key="1">
    <source>
        <dbReference type="HAMAP-Rule" id="MF_00736"/>
    </source>
</evidence>
<evidence type="ECO:0000305" key="2"/>
<protein>
    <recommendedName>
        <fullName evidence="1">Large ribosomal subunit protein uL11</fullName>
    </recommendedName>
    <alternativeName>
        <fullName evidence="2">50S ribosomal protein L11</fullName>
    </alternativeName>
</protein>
<feature type="chain" id="PRO_1000046129" description="Large ribosomal subunit protein uL11">
    <location>
        <begin position="1"/>
        <end position="144"/>
    </location>
</feature>
<keyword id="KW-0488">Methylation</keyword>
<keyword id="KW-1185">Reference proteome</keyword>
<keyword id="KW-0687">Ribonucleoprotein</keyword>
<keyword id="KW-0689">Ribosomal protein</keyword>
<keyword id="KW-0694">RNA-binding</keyword>
<keyword id="KW-0699">rRNA-binding</keyword>
<dbReference type="EMBL" id="CP000697">
    <property type="protein sequence ID" value="ABQ31157.1"/>
    <property type="molecule type" value="Genomic_DNA"/>
</dbReference>
<dbReference type="RefSeq" id="WP_007424163.1">
    <property type="nucleotide sequence ID" value="NC_009484.1"/>
</dbReference>
<dbReference type="SMR" id="A5FZX5"/>
<dbReference type="STRING" id="349163.Acry_1956"/>
<dbReference type="KEGG" id="acr:Acry_1956"/>
<dbReference type="eggNOG" id="COG0080">
    <property type="taxonomic scope" value="Bacteria"/>
</dbReference>
<dbReference type="HOGENOM" id="CLU_074237_2_0_5"/>
<dbReference type="Proteomes" id="UP000000245">
    <property type="component" value="Chromosome"/>
</dbReference>
<dbReference type="GO" id="GO:0022625">
    <property type="term" value="C:cytosolic large ribosomal subunit"/>
    <property type="evidence" value="ECO:0007669"/>
    <property type="project" value="TreeGrafter"/>
</dbReference>
<dbReference type="GO" id="GO:0070180">
    <property type="term" value="F:large ribosomal subunit rRNA binding"/>
    <property type="evidence" value="ECO:0007669"/>
    <property type="project" value="UniProtKB-UniRule"/>
</dbReference>
<dbReference type="GO" id="GO:0003735">
    <property type="term" value="F:structural constituent of ribosome"/>
    <property type="evidence" value="ECO:0007669"/>
    <property type="project" value="InterPro"/>
</dbReference>
<dbReference type="GO" id="GO:0006412">
    <property type="term" value="P:translation"/>
    <property type="evidence" value="ECO:0007669"/>
    <property type="project" value="UniProtKB-UniRule"/>
</dbReference>
<dbReference type="CDD" id="cd00349">
    <property type="entry name" value="Ribosomal_L11"/>
    <property type="match status" value="1"/>
</dbReference>
<dbReference type="FunFam" id="3.30.1550.10:FF:000001">
    <property type="entry name" value="50S ribosomal protein L11"/>
    <property type="match status" value="1"/>
</dbReference>
<dbReference type="Gene3D" id="1.10.10.250">
    <property type="entry name" value="Ribosomal protein L11, C-terminal domain"/>
    <property type="match status" value="1"/>
</dbReference>
<dbReference type="Gene3D" id="3.30.1550.10">
    <property type="entry name" value="Ribosomal protein L11/L12, N-terminal domain"/>
    <property type="match status" value="1"/>
</dbReference>
<dbReference type="HAMAP" id="MF_00736">
    <property type="entry name" value="Ribosomal_uL11"/>
    <property type="match status" value="1"/>
</dbReference>
<dbReference type="InterPro" id="IPR000911">
    <property type="entry name" value="Ribosomal_uL11"/>
</dbReference>
<dbReference type="InterPro" id="IPR006519">
    <property type="entry name" value="Ribosomal_uL11_bac-typ"/>
</dbReference>
<dbReference type="InterPro" id="IPR020783">
    <property type="entry name" value="Ribosomal_uL11_C"/>
</dbReference>
<dbReference type="InterPro" id="IPR036769">
    <property type="entry name" value="Ribosomal_uL11_C_sf"/>
</dbReference>
<dbReference type="InterPro" id="IPR020785">
    <property type="entry name" value="Ribosomal_uL11_CS"/>
</dbReference>
<dbReference type="InterPro" id="IPR020784">
    <property type="entry name" value="Ribosomal_uL11_N"/>
</dbReference>
<dbReference type="InterPro" id="IPR036796">
    <property type="entry name" value="Ribosomal_uL11_N_sf"/>
</dbReference>
<dbReference type="NCBIfam" id="TIGR01632">
    <property type="entry name" value="L11_bact"/>
    <property type="match status" value="1"/>
</dbReference>
<dbReference type="PANTHER" id="PTHR11661">
    <property type="entry name" value="60S RIBOSOMAL PROTEIN L12"/>
    <property type="match status" value="1"/>
</dbReference>
<dbReference type="PANTHER" id="PTHR11661:SF1">
    <property type="entry name" value="LARGE RIBOSOMAL SUBUNIT PROTEIN UL11M"/>
    <property type="match status" value="1"/>
</dbReference>
<dbReference type="Pfam" id="PF00298">
    <property type="entry name" value="Ribosomal_L11"/>
    <property type="match status" value="1"/>
</dbReference>
<dbReference type="Pfam" id="PF03946">
    <property type="entry name" value="Ribosomal_L11_N"/>
    <property type="match status" value="1"/>
</dbReference>
<dbReference type="SMART" id="SM00649">
    <property type="entry name" value="RL11"/>
    <property type="match status" value="1"/>
</dbReference>
<dbReference type="SUPFAM" id="SSF54747">
    <property type="entry name" value="Ribosomal L11/L12e N-terminal domain"/>
    <property type="match status" value="1"/>
</dbReference>
<dbReference type="SUPFAM" id="SSF46906">
    <property type="entry name" value="Ribosomal protein L11, C-terminal domain"/>
    <property type="match status" value="1"/>
</dbReference>
<dbReference type="PROSITE" id="PS00359">
    <property type="entry name" value="RIBOSOMAL_L11"/>
    <property type="match status" value="1"/>
</dbReference>
<reference key="1">
    <citation type="submission" date="2007-05" db="EMBL/GenBank/DDBJ databases">
        <title>Complete sequence of chromosome of Acidiphilium cryptum JF-5.</title>
        <authorList>
            <consortium name="US DOE Joint Genome Institute"/>
            <person name="Copeland A."/>
            <person name="Lucas S."/>
            <person name="Lapidus A."/>
            <person name="Barry K."/>
            <person name="Detter J.C."/>
            <person name="Glavina del Rio T."/>
            <person name="Hammon N."/>
            <person name="Israni S."/>
            <person name="Dalin E."/>
            <person name="Tice H."/>
            <person name="Pitluck S."/>
            <person name="Sims D."/>
            <person name="Brettin T."/>
            <person name="Bruce D."/>
            <person name="Han C."/>
            <person name="Schmutz J."/>
            <person name="Larimer F."/>
            <person name="Land M."/>
            <person name="Hauser L."/>
            <person name="Kyrpides N."/>
            <person name="Kim E."/>
            <person name="Magnuson T."/>
            <person name="Richardson P."/>
        </authorList>
    </citation>
    <scope>NUCLEOTIDE SEQUENCE [LARGE SCALE GENOMIC DNA]</scope>
    <source>
        <strain>JF-5</strain>
    </source>
</reference>
<proteinExistence type="inferred from homology"/>
<name>RL11_ACICJ</name>
<organism>
    <name type="scientific">Acidiphilium cryptum (strain JF-5)</name>
    <dbReference type="NCBI Taxonomy" id="349163"/>
    <lineage>
        <taxon>Bacteria</taxon>
        <taxon>Pseudomonadati</taxon>
        <taxon>Pseudomonadota</taxon>
        <taxon>Alphaproteobacteria</taxon>
        <taxon>Acetobacterales</taxon>
        <taxon>Acidocellaceae</taxon>
        <taxon>Acidiphilium</taxon>
    </lineage>
</organism>
<comment type="function">
    <text evidence="1">Forms part of the ribosomal stalk which helps the ribosome interact with GTP-bound translation factors.</text>
</comment>
<comment type="subunit">
    <text evidence="1">Part of the ribosomal stalk of the 50S ribosomal subunit. Interacts with L10 and the large rRNA to form the base of the stalk. L10 forms an elongated spine to which L12 dimers bind in a sequential fashion forming a multimeric L10(L12)X complex.</text>
</comment>
<comment type="PTM">
    <text evidence="1">One or more lysine residues are methylated.</text>
</comment>
<comment type="similarity">
    <text evidence="1">Belongs to the universal ribosomal protein uL11 family.</text>
</comment>
<accession>A5FZX5</accession>
<sequence length="144" mass="15130">MAKKVVGYIKLQIPAGKANPSPPVGPALGQRGLNIMQFCKDFNAATQGMEVGMPVPVVITAYADRTFSFITKTPPNTYFLKKAAGIQKGSTATGKGATVGKVTMSQLREIAQTKMVHMNANDVDGAVRMLVGSARSMGLSVVEG</sequence>